<sequence length="379" mass="41591">MSGFLPFSRPAMGVEELAAVKEVLESGWITTGPKNQALEQAFCQLTGNQHAIAVSSATAGMHITLMALEIGKGDEVITPSLTWVSTLNMISLLGATPVMVDVDRDTLMVTPEAIEAAITPRTKAIIPVHYAGAPADIDAIRAIGERYGIAVIEDAAHAVGTYYKGRHIGAKGTAIFSFHAIKNITCAEGGLIVTDNENLARQLRMLKFHGLGVDAYDRHTWGRAPQAEVLTPGYKYNLTDINAAIALTQLVKLEHLNTRRREIAQQYQQALAALPFQPLSLPAWPHVHAWHLFIIRVDEQRCGISRDALMEALKERGIGTGLHFRAAHTQKYYRERFPTLSLPNTEWNSERICSLPLFPDMTTADADRVITALQQLAGQ</sequence>
<keyword id="KW-0032">Aminotransferase</keyword>
<keyword id="KW-0046">Antibiotic resistance</keyword>
<keyword id="KW-0441">Lipid A biosynthesis</keyword>
<keyword id="KW-0444">Lipid biosynthesis</keyword>
<keyword id="KW-0443">Lipid metabolism</keyword>
<keyword id="KW-0448">Lipopolysaccharide biosynthesis</keyword>
<keyword id="KW-0663">Pyridoxal phosphate</keyword>
<keyword id="KW-0808">Transferase</keyword>
<name>ARNB_ECOL5</name>
<feature type="chain" id="PRO_0000380530" description="UDP-4-amino-4-deoxy-L-arabinose--oxoglutarate aminotransferase">
    <location>
        <begin position="1"/>
        <end position="379"/>
    </location>
</feature>
<feature type="modified residue" description="N6-(pyridoxal phosphate)lysine" evidence="1">
    <location>
        <position position="182"/>
    </location>
</feature>
<proteinExistence type="inferred from homology"/>
<dbReference type="EC" id="2.6.1.87" evidence="1"/>
<dbReference type="EMBL" id="CP000247">
    <property type="protein sequence ID" value="ABG70290.1"/>
    <property type="status" value="ALT_INIT"/>
    <property type="molecule type" value="Genomic_DNA"/>
</dbReference>
<dbReference type="RefSeq" id="WP_011076488.1">
    <property type="nucleotide sequence ID" value="NC_008253.1"/>
</dbReference>
<dbReference type="SMR" id="Q0TFI9"/>
<dbReference type="KEGG" id="ecp:ECP_2296"/>
<dbReference type="HOGENOM" id="CLU_033332_0_3_6"/>
<dbReference type="UniPathway" id="UPA00030"/>
<dbReference type="UniPathway" id="UPA00032">
    <property type="reaction ID" value="UER00493"/>
</dbReference>
<dbReference type="Proteomes" id="UP000009182">
    <property type="component" value="Chromosome"/>
</dbReference>
<dbReference type="GO" id="GO:0016020">
    <property type="term" value="C:membrane"/>
    <property type="evidence" value="ECO:0007669"/>
    <property type="project" value="GOC"/>
</dbReference>
<dbReference type="GO" id="GO:0030170">
    <property type="term" value="F:pyridoxal phosphate binding"/>
    <property type="evidence" value="ECO:0007669"/>
    <property type="project" value="TreeGrafter"/>
</dbReference>
<dbReference type="GO" id="GO:0099620">
    <property type="term" value="F:UDP-4-amino-4-deoxy-L-arabinose aminotransferase"/>
    <property type="evidence" value="ECO:0007669"/>
    <property type="project" value="UniProtKB-EC"/>
</dbReference>
<dbReference type="GO" id="GO:0009245">
    <property type="term" value="P:lipid A biosynthetic process"/>
    <property type="evidence" value="ECO:0007669"/>
    <property type="project" value="UniProtKB-KW"/>
</dbReference>
<dbReference type="GO" id="GO:0009103">
    <property type="term" value="P:lipopolysaccharide biosynthetic process"/>
    <property type="evidence" value="ECO:0007669"/>
    <property type="project" value="UniProtKB-UniRule"/>
</dbReference>
<dbReference type="GO" id="GO:0046677">
    <property type="term" value="P:response to antibiotic"/>
    <property type="evidence" value="ECO:0007669"/>
    <property type="project" value="UniProtKB-KW"/>
</dbReference>
<dbReference type="CDD" id="cd00616">
    <property type="entry name" value="AHBA_syn"/>
    <property type="match status" value="1"/>
</dbReference>
<dbReference type="FunFam" id="3.40.640.10:FF:000040">
    <property type="entry name" value="UDP-4-amino-4-deoxy-L-arabinose--oxoglutarate aminotransferase"/>
    <property type="match status" value="1"/>
</dbReference>
<dbReference type="FunFam" id="3.90.1150.10:FF:000030">
    <property type="entry name" value="UDP-4-amino-4-deoxy-L-arabinose--oxoglutarate aminotransferase"/>
    <property type="match status" value="1"/>
</dbReference>
<dbReference type="Gene3D" id="3.90.1150.10">
    <property type="entry name" value="Aspartate Aminotransferase, domain 1"/>
    <property type="match status" value="1"/>
</dbReference>
<dbReference type="Gene3D" id="3.40.640.10">
    <property type="entry name" value="Type I PLP-dependent aspartate aminotransferase-like (Major domain)"/>
    <property type="match status" value="1"/>
</dbReference>
<dbReference type="HAMAP" id="MF_01167">
    <property type="entry name" value="ArnB_transfer"/>
    <property type="match status" value="1"/>
</dbReference>
<dbReference type="InterPro" id="IPR022850">
    <property type="entry name" value="ArnB_NH2Trfase"/>
</dbReference>
<dbReference type="InterPro" id="IPR000653">
    <property type="entry name" value="DegT/StrS_aminotransferase"/>
</dbReference>
<dbReference type="InterPro" id="IPR015424">
    <property type="entry name" value="PyrdxlP-dep_Trfase"/>
</dbReference>
<dbReference type="InterPro" id="IPR015421">
    <property type="entry name" value="PyrdxlP-dep_Trfase_major"/>
</dbReference>
<dbReference type="InterPro" id="IPR015422">
    <property type="entry name" value="PyrdxlP-dep_Trfase_small"/>
</dbReference>
<dbReference type="NCBIfam" id="NF008658">
    <property type="entry name" value="PRK11658.1"/>
    <property type="match status" value="1"/>
</dbReference>
<dbReference type="PANTHER" id="PTHR30244">
    <property type="entry name" value="TRANSAMINASE"/>
    <property type="match status" value="1"/>
</dbReference>
<dbReference type="PANTHER" id="PTHR30244:SF41">
    <property type="entry name" value="UDP-4-AMINO-4-DEOXY-L-ARABINOSE--OXOGLUTARATE AMINOTRANSFERASE"/>
    <property type="match status" value="1"/>
</dbReference>
<dbReference type="Pfam" id="PF01041">
    <property type="entry name" value="DegT_DnrJ_EryC1"/>
    <property type="match status" value="1"/>
</dbReference>
<dbReference type="PIRSF" id="PIRSF000390">
    <property type="entry name" value="PLP_StrS"/>
    <property type="match status" value="1"/>
</dbReference>
<dbReference type="SUPFAM" id="SSF53383">
    <property type="entry name" value="PLP-dependent transferases"/>
    <property type="match status" value="1"/>
</dbReference>
<comment type="function">
    <text evidence="1">Catalyzes the conversion of UDP-4-keto-arabinose (UDP-Ara4O) to UDP-4-amino-4-deoxy-L-arabinose (UDP-L-Ara4N). The modified arabinose is attached to lipid A and is required for resistance to polymyxin and cationic antimicrobial peptides.</text>
</comment>
<comment type="catalytic activity">
    <reaction evidence="1">
        <text>UDP-4-amino-4-deoxy-beta-L-arabinose + 2-oxoglutarate = UDP-beta-L-threo-pentopyranos-4-ulose + L-glutamate</text>
        <dbReference type="Rhea" id="RHEA:24710"/>
        <dbReference type="ChEBI" id="CHEBI:16810"/>
        <dbReference type="ChEBI" id="CHEBI:29985"/>
        <dbReference type="ChEBI" id="CHEBI:58708"/>
        <dbReference type="ChEBI" id="CHEBI:58710"/>
        <dbReference type="EC" id="2.6.1.87"/>
    </reaction>
</comment>
<comment type="cofactor">
    <cofactor evidence="1">
        <name>pyridoxal 5'-phosphate</name>
        <dbReference type="ChEBI" id="CHEBI:597326"/>
    </cofactor>
</comment>
<comment type="pathway">
    <text evidence="1">Nucleotide-sugar biosynthesis; UDP-4-deoxy-4-formamido-beta-L-arabinose biosynthesis; UDP-4-deoxy-4-formamido-beta-L-arabinose from UDP-alpha-D-glucuronate: step 2/3.</text>
</comment>
<comment type="pathway">
    <text evidence="1">Bacterial outer membrane biogenesis; lipopolysaccharide biosynthesis.</text>
</comment>
<comment type="subunit">
    <text evidence="1">Homodimer.</text>
</comment>
<comment type="similarity">
    <text evidence="1">Belongs to the DegT/DnrJ/EryC1 family. ArnB subfamily.</text>
</comment>
<comment type="sequence caution" evidence="2">
    <conflict type="erroneous initiation">
        <sequence resource="EMBL-CDS" id="ABG70290"/>
    </conflict>
</comment>
<reference key="1">
    <citation type="journal article" date="2006" name="Mol. Microbiol.">
        <title>Role of pathogenicity island-associated integrases in the genome plasticity of uropathogenic Escherichia coli strain 536.</title>
        <authorList>
            <person name="Hochhut B."/>
            <person name="Wilde C."/>
            <person name="Balling G."/>
            <person name="Middendorf B."/>
            <person name="Dobrindt U."/>
            <person name="Brzuszkiewicz E."/>
            <person name="Gottschalk G."/>
            <person name="Carniel E."/>
            <person name="Hacker J."/>
        </authorList>
    </citation>
    <scope>NUCLEOTIDE SEQUENCE [LARGE SCALE GENOMIC DNA]</scope>
    <source>
        <strain>536 / UPEC</strain>
    </source>
</reference>
<gene>
    <name evidence="1" type="primary">arnB</name>
    <name type="ordered locus">ECP_2296</name>
</gene>
<organism>
    <name type="scientific">Escherichia coli O6:K15:H31 (strain 536 / UPEC)</name>
    <dbReference type="NCBI Taxonomy" id="362663"/>
    <lineage>
        <taxon>Bacteria</taxon>
        <taxon>Pseudomonadati</taxon>
        <taxon>Pseudomonadota</taxon>
        <taxon>Gammaproteobacteria</taxon>
        <taxon>Enterobacterales</taxon>
        <taxon>Enterobacteriaceae</taxon>
        <taxon>Escherichia</taxon>
    </lineage>
</organism>
<accession>Q0TFI9</accession>
<protein>
    <recommendedName>
        <fullName evidence="1">UDP-4-amino-4-deoxy-L-arabinose--oxoglutarate aminotransferase</fullName>
        <ecNumber evidence="1">2.6.1.87</ecNumber>
    </recommendedName>
    <alternativeName>
        <fullName evidence="1">UDP-(beta-L-threo-pentapyranosyl-4''-ulose diphosphate) aminotransferase</fullName>
        <shortName evidence="1">UDP-Ara4O aminotransferase</shortName>
    </alternativeName>
    <alternativeName>
        <fullName evidence="1">UDP-4-amino-4-deoxy-L-arabinose aminotransferase</fullName>
    </alternativeName>
</protein>
<evidence type="ECO:0000255" key="1">
    <source>
        <dbReference type="HAMAP-Rule" id="MF_01167"/>
    </source>
</evidence>
<evidence type="ECO:0000305" key="2"/>